<comment type="function">
    <text evidence="1">Catalyzes the addition and repair of the essential 3'-terminal CCA sequence in tRNAs without using a nucleic acid template. Adds these three nucleotides in the order of C, C, and A to the tRNA nucleotide-73, using CTP and ATP as substrates and producing inorganic pyrophosphate. tRNA 3'-terminal CCA addition is required both for tRNA processing and repair. Also involved in tRNA surveillance by mediating tandem CCA addition to generate a CCACCA at the 3' terminus of unstable tRNAs. While stable tRNAs receive only 3'-terminal CCA, unstable tRNAs are marked with CCACCA and rapidly degraded.</text>
</comment>
<comment type="catalytic activity">
    <reaction evidence="1">
        <text>a tRNA precursor + 2 CTP + ATP = a tRNA with a 3' CCA end + 3 diphosphate</text>
        <dbReference type="Rhea" id="RHEA:14433"/>
        <dbReference type="Rhea" id="RHEA-COMP:10465"/>
        <dbReference type="Rhea" id="RHEA-COMP:10468"/>
        <dbReference type="ChEBI" id="CHEBI:30616"/>
        <dbReference type="ChEBI" id="CHEBI:33019"/>
        <dbReference type="ChEBI" id="CHEBI:37563"/>
        <dbReference type="ChEBI" id="CHEBI:74896"/>
        <dbReference type="ChEBI" id="CHEBI:83071"/>
        <dbReference type="EC" id="2.7.7.72"/>
    </reaction>
</comment>
<comment type="catalytic activity">
    <reaction evidence="1">
        <text>a tRNA with a 3' CCA end + 2 CTP + ATP = a tRNA with a 3' CCACCA end + 3 diphosphate</text>
        <dbReference type="Rhea" id="RHEA:76235"/>
        <dbReference type="Rhea" id="RHEA-COMP:10468"/>
        <dbReference type="Rhea" id="RHEA-COMP:18655"/>
        <dbReference type="ChEBI" id="CHEBI:30616"/>
        <dbReference type="ChEBI" id="CHEBI:33019"/>
        <dbReference type="ChEBI" id="CHEBI:37563"/>
        <dbReference type="ChEBI" id="CHEBI:83071"/>
        <dbReference type="ChEBI" id="CHEBI:195187"/>
    </reaction>
    <physiologicalReaction direction="left-to-right" evidence="1">
        <dbReference type="Rhea" id="RHEA:76236"/>
    </physiologicalReaction>
</comment>
<comment type="cofactor">
    <cofactor evidence="1">
        <name>Mg(2+)</name>
        <dbReference type="ChEBI" id="CHEBI:18420"/>
    </cofactor>
    <text evidence="1">Magnesium is required for nucleotidyltransferase activity.</text>
</comment>
<comment type="cofactor">
    <cofactor evidence="1">
        <name>Ni(2+)</name>
        <dbReference type="ChEBI" id="CHEBI:49786"/>
    </cofactor>
    <text evidence="1">Nickel for phosphatase activity.</text>
</comment>
<comment type="subunit">
    <text evidence="1">Monomer. Can also form homodimers and oligomers.</text>
</comment>
<comment type="domain">
    <text evidence="1">Comprises two domains: an N-terminal domain containing the nucleotidyltransferase activity and a C-terminal HD domain associated with both phosphodiesterase and phosphatase activities.</text>
</comment>
<comment type="miscellaneous">
    <text evidence="1">A single active site specifically recognizes both ATP and CTP and is responsible for their addition.</text>
</comment>
<comment type="similarity">
    <text evidence="1">Belongs to the tRNA nucleotidyltransferase/poly(A) polymerase family. Bacterial CCA-adding enzyme type 1 subfamily.</text>
</comment>
<dbReference type="EC" id="2.7.7.72" evidence="1"/>
<dbReference type="EC" id="3.1.3.-" evidence="1"/>
<dbReference type="EC" id="3.1.4.-" evidence="1"/>
<dbReference type="EMBL" id="CP000563">
    <property type="protein sequence ID" value="ABN60674.1"/>
    <property type="molecule type" value="Genomic_DNA"/>
</dbReference>
<dbReference type="RefSeq" id="WP_011846144.1">
    <property type="nucleotide sequence ID" value="NC_009052.1"/>
</dbReference>
<dbReference type="SMR" id="A3D1R1"/>
<dbReference type="STRING" id="325240.Sbal_1155"/>
<dbReference type="KEGG" id="sbl:Sbal_1155"/>
<dbReference type="HOGENOM" id="CLU_015961_1_1_6"/>
<dbReference type="OrthoDB" id="9805698at2"/>
<dbReference type="Proteomes" id="UP000001557">
    <property type="component" value="Chromosome"/>
</dbReference>
<dbReference type="GO" id="GO:0005524">
    <property type="term" value="F:ATP binding"/>
    <property type="evidence" value="ECO:0007669"/>
    <property type="project" value="UniProtKB-UniRule"/>
</dbReference>
<dbReference type="GO" id="GO:0004810">
    <property type="term" value="F:CCA tRNA nucleotidyltransferase activity"/>
    <property type="evidence" value="ECO:0007669"/>
    <property type="project" value="UniProtKB-UniRule"/>
</dbReference>
<dbReference type="GO" id="GO:0004112">
    <property type="term" value="F:cyclic-nucleotide phosphodiesterase activity"/>
    <property type="evidence" value="ECO:0007669"/>
    <property type="project" value="UniProtKB-UniRule"/>
</dbReference>
<dbReference type="GO" id="GO:0000287">
    <property type="term" value="F:magnesium ion binding"/>
    <property type="evidence" value="ECO:0007669"/>
    <property type="project" value="UniProtKB-UniRule"/>
</dbReference>
<dbReference type="GO" id="GO:0016791">
    <property type="term" value="F:phosphatase activity"/>
    <property type="evidence" value="ECO:0007669"/>
    <property type="project" value="UniProtKB-UniRule"/>
</dbReference>
<dbReference type="GO" id="GO:0000049">
    <property type="term" value="F:tRNA binding"/>
    <property type="evidence" value="ECO:0007669"/>
    <property type="project" value="UniProtKB-UniRule"/>
</dbReference>
<dbReference type="GO" id="GO:0042245">
    <property type="term" value="P:RNA repair"/>
    <property type="evidence" value="ECO:0007669"/>
    <property type="project" value="UniProtKB-KW"/>
</dbReference>
<dbReference type="GO" id="GO:0001680">
    <property type="term" value="P:tRNA 3'-terminal CCA addition"/>
    <property type="evidence" value="ECO:0007669"/>
    <property type="project" value="UniProtKB-UniRule"/>
</dbReference>
<dbReference type="CDD" id="cd00077">
    <property type="entry name" value="HDc"/>
    <property type="match status" value="1"/>
</dbReference>
<dbReference type="CDD" id="cd05398">
    <property type="entry name" value="NT_ClassII-CCAase"/>
    <property type="match status" value="1"/>
</dbReference>
<dbReference type="FunFam" id="1.10.3090.10:FF:000001">
    <property type="entry name" value="Multifunctional CCA protein"/>
    <property type="match status" value="1"/>
</dbReference>
<dbReference type="Gene3D" id="3.30.460.10">
    <property type="entry name" value="Beta Polymerase, domain 2"/>
    <property type="match status" value="1"/>
</dbReference>
<dbReference type="Gene3D" id="1.10.3090.10">
    <property type="entry name" value="cca-adding enzyme, domain 2"/>
    <property type="match status" value="1"/>
</dbReference>
<dbReference type="HAMAP" id="MF_01261">
    <property type="entry name" value="CCA_bact_type1"/>
    <property type="match status" value="1"/>
</dbReference>
<dbReference type="HAMAP" id="MF_01262">
    <property type="entry name" value="CCA_bact_type2"/>
    <property type="match status" value="1"/>
</dbReference>
<dbReference type="InterPro" id="IPR012006">
    <property type="entry name" value="CCA_bact"/>
</dbReference>
<dbReference type="InterPro" id="IPR003607">
    <property type="entry name" value="HD/PDEase_dom"/>
</dbReference>
<dbReference type="InterPro" id="IPR006674">
    <property type="entry name" value="HD_domain"/>
</dbReference>
<dbReference type="InterPro" id="IPR043519">
    <property type="entry name" value="NT_sf"/>
</dbReference>
<dbReference type="InterPro" id="IPR002646">
    <property type="entry name" value="PolA_pol_head_dom"/>
</dbReference>
<dbReference type="InterPro" id="IPR032828">
    <property type="entry name" value="PolyA_RNA-bd"/>
</dbReference>
<dbReference type="InterPro" id="IPR050124">
    <property type="entry name" value="tRNA_CCA-adding_enzyme"/>
</dbReference>
<dbReference type="NCBIfam" id="NF008137">
    <property type="entry name" value="PRK10885.1"/>
    <property type="match status" value="1"/>
</dbReference>
<dbReference type="PANTHER" id="PTHR47545">
    <property type="entry name" value="MULTIFUNCTIONAL CCA PROTEIN"/>
    <property type="match status" value="1"/>
</dbReference>
<dbReference type="PANTHER" id="PTHR47545:SF1">
    <property type="entry name" value="MULTIFUNCTIONAL CCA PROTEIN"/>
    <property type="match status" value="1"/>
</dbReference>
<dbReference type="Pfam" id="PF01966">
    <property type="entry name" value="HD"/>
    <property type="match status" value="1"/>
</dbReference>
<dbReference type="Pfam" id="PF01743">
    <property type="entry name" value="PolyA_pol"/>
    <property type="match status" value="1"/>
</dbReference>
<dbReference type="Pfam" id="PF12627">
    <property type="entry name" value="PolyA_pol_RNAbd"/>
    <property type="match status" value="1"/>
</dbReference>
<dbReference type="PIRSF" id="PIRSF000813">
    <property type="entry name" value="CCA_bact"/>
    <property type="match status" value="1"/>
</dbReference>
<dbReference type="SUPFAM" id="SSF81301">
    <property type="entry name" value="Nucleotidyltransferase"/>
    <property type="match status" value="1"/>
</dbReference>
<dbReference type="SUPFAM" id="SSF81891">
    <property type="entry name" value="Poly A polymerase C-terminal region-like"/>
    <property type="match status" value="1"/>
</dbReference>
<dbReference type="PROSITE" id="PS51831">
    <property type="entry name" value="HD"/>
    <property type="match status" value="1"/>
</dbReference>
<organism>
    <name type="scientific">Shewanella baltica (strain OS155 / ATCC BAA-1091)</name>
    <dbReference type="NCBI Taxonomy" id="325240"/>
    <lineage>
        <taxon>Bacteria</taxon>
        <taxon>Pseudomonadati</taxon>
        <taxon>Pseudomonadota</taxon>
        <taxon>Gammaproteobacteria</taxon>
        <taxon>Alteromonadales</taxon>
        <taxon>Shewanellaceae</taxon>
        <taxon>Shewanella</taxon>
    </lineage>
</organism>
<accession>A3D1R1</accession>
<evidence type="ECO:0000255" key="1">
    <source>
        <dbReference type="HAMAP-Rule" id="MF_01261"/>
    </source>
</evidence>
<protein>
    <recommendedName>
        <fullName evidence="1">Multifunctional CCA protein</fullName>
    </recommendedName>
    <domain>
        <recommendedName>
            <fullName evidence="1">CCA-adding enzyme</fullName>
            <ecNumber evidence="1">2.7.7.72</ecNumber>
        </recommendedName>
        <alternativeName>
            <fullName evidence="1">CCA tRNA nucleotidyltransferase</fullName>
        </alternativeName>
        <alternativeName>
            <fullName evidence="1">tRNA CCA-pyrophosphorylase</fullName>
        </alternativeName>
        <alternativeName>
            <fullName evidence="1">tRNA adenylyl-/cytidylyl-transferase</fullName>
        </alternativeName>
        <alternativeName>
            <fullName evidence="1">tRNA nucleotidyltransferase</fullName>
        </alternativeName>
        <alternativeName>
            <fullName evidence="1">tRNA-NT</fullName>
        </alternativeName>
    </domain>
    <domain>
        <recommendedName>
            <fullName evidence="1">2'-nucleotidase</fullName>
            <ecNumber evidence="1">3.1.3.-</ecNumber>
        </recommendedName>
    </domain>
    <domain>
        <recommendedName>
            <fullName evidence="1">2',3'-cyclic phosphodiesterase</fullName>
            <ecNumber evidence="1">3.1.4.-</ecNumber>
        </recommendedName>
    </domain>
    <domain>
        <recommendedName>
            <fullName evidence="1">Phosphatase</fullName>
            <ecNumber evidence="1">3.1.3.-</ecNumber>
        </recommendedName>
    </domain>
</protein>
<keyword id="KW-0067">ATP-binding</keyword>
<keyword id="KW-0378">Hydrolase</keyword>
<keyword id="KW-0460">Magnesium</keyword>
<keyword id="KW-0479">Metal-binding</keyword>
<keyword id="KW-0511">Multifunctional enzyme</keyword>
<keyword id="KW-0533">Nickel</keyword>
<keyword id="KW-0547">Nucleotide-binding</keyword>
<keyword id="KW-0548">Nucleotidyltransferase</keyword>
<keyword id="KW-1185">Reference proteome</keyword>
<keyword id="KW-0692">RNA repair</keyword>
<keyword id="KW-0694">RNA-binding</keyword>
<keyword id="KW-0808">Transferase</keyword>
<keyword id="KW-0819">tRNA processing</keyword>
<proteinExistence type="inferred from homology"/>
<gene>
    <name evidence="1" type="primary">cca</name>
    <name type="ordered locus">Sbal_1155</name>
</gene>
<name>CCA_SHEB5</name>
<feature type="chain" id="PRO_1000054291" description="Multifunctional CCA protein">
    <location>
        <begin position="1"/>
        <end position="416"/>
    </location>
</feature>
<feature type="domain" description="HD" evidence="1">
    <location>
        <begin position="228"/>
        <end position="329"/>
    </location>
</feature>
<feature type="binding site" evidence="1">
    <location>
        <position position="8"/>
    </location>
    <ligand>
        <name>ATP</name>
        <dbReference type="ChEBI" id="CHEBI:30616"/>
    </ligand>
</feature>
<feature type="binding site" evidence="1">
    <location>
        <position position="8"/>
    </location>
    <ligand>
        <name>CTP</name>
        <dbReference type="ChEBI" id="CHEBI:37563"/>
    </ligand>
</feature>
<feature type="binding site" evidence="1">
    <location>
        <position position="11"/>
    </location>
    <ligand>
        <name>ATP</name>
        <dbReference type="ChEBI" id="CHEBI:30616"/>
    </ligand>
</feature>
<feature type="binding site" evidence="1">
    <location>
        <position position="11"/>
    </location>
    <ligand>
        <name>CTP</name>
        <dbReference type="ChEBI" id="CHEBI:37563"/>
    </ligand>
</feature>
<feature type="binding site" evidence="1">
    <location>
        <position position="21"/>
    </location>
    <ligand>
        <name>Mg(2+)</name>
        <dbReference type="ChEBI" id="CHEBI:18420"/>
    </ligand>
</feature>
<feature type="binding site" evidence="1">
    <location>
        <position position="23"/>
    </location>
    <ligand>
        <name>Mg(2+)</name>
        <dbReference type="ChEBI" id="CHEBI:18420"/>
    </ligand>
</feature>
<feature type="binding site" evidence="1">
    <location>
        <position position="91"/>
    </location>
    <ligand>
        <name>ATP</name>
        <dbReference type="ChEBI" id="CHEBI:30616"/>
    </ligand>
</feature>
<feature type="binding site" evidence="1">
    <location>
        <position position="91"/>
    </location>
    <ligand>
        <name>CTP</name>
        <dbReference type="ChEBI" id="CHEBI:37563"/>
    </ligand>
</feature>
<feature type="binding site" evidence="1">
    <location>
        <position position="137"/>
    </location>
    <ligand>
        <name>ATP</name>
        <dbReference type="ChEBI" id="CHEBI:30616"/>
    </ligand>
</feature>
<feature type="binding site" evidence="1">
    <location>
        <position position="137"/>
    </location>
    <ligand>
        <name>CTP</name>
        <dbReference type="ChEBI" id="CHEBI:37563"/>
    </ligand>
</feature>
<feature type="binding site" evidence="1">
    <location>
        <position position="140"/>
    </location>
    <ligand>
        <name>ATP</name>
        <dbReference type="ChEBI" id="CHEBI:30616"/>
    </ligand>
</feature>
<feature type="binding site" evidence="1">
    <location>
        <position position="140"/>
    </location>
    <ligand>
        <name>CTP</name>
        <dbReference type="ChEBI" id="CHEBI:37563"/>
    </ligand>
</feature>
<reference key="1">
    <citation type="submission" date="2007-02" db="EMBL/GenBank/DDBJ databases">
        <title>Complete sequence of chromosome of Shewanella baltica OS155.</title>
        <authorList>
            <consortium name="US DOE Joint Genome Institute"/>
            <person name="Copeland A."/>
            <person name="Lucas S."/>
            <person name="Lapidus A."/>
            <person name="Barry K."/>
            <person name="Detter J.C."/>
            <person name="Glavina del Rio T."/>
            <person name="Hammon N."/>
            <person name="Israni S."/>
            <person name="Dalin E."/>
            <person name="Tice H."/>
            <person name="Pitluck S."/>
            <person name="Sims D.R."/>
            <person name="Brettin T."/>
            <person name="Bruce D."/>
            <person name="Han C."/>
            <person name="Tapia R."/>
            <person name="Brainard J."/>
            <person name="Schmutz J."/>
            <person name="Larimer F."/>
            <person name="Land M."/>
            <person name="Hauser L."/>
            <person name="Kyrpides N."/>
            <person name="Mikhailova N."/>
            <person name="Brettar I."/>
            <person name="Klappenbach J."/>
            <person name="Konstantinidis K."/>
            <person name="Rodrigues J."/>
            <person name="Tiedje J."/>
            <person name="Richardson P."/>
        </authorList>
    </citation>
    <scope>NUCLEOTIDE SEQUENCE [LARGE SCALE GENOMIC DNA]</scope>
    <source>
        <strain>OS155 / ATCC BAA-1091</strain>
    </source>
</reference>
<sequence>MKIYLVGGAVRDSLLNLPIKDKDYLVVGATPEQMLQLGYRQVGKDFPVFLHPKNQQEYALARTERKIGLGYGGFSCHASPDVTLEQDLLRRDLTINAIAQDEKGNLYDPFNGIEDINARLLRHVSDAFVEDPLRVLRVARFAARFHALGFHIAAETLALMRQISASDELNALTAERVWQEVDKSLGGPHPEVFFEVLHQCGALEVLFPEIFALFGVPQPEKWHPEIDTGVHTLMVLAQAALLTEDKSVRFAALVHDLGKALSPKEHLPKHHGHGQKGLPLIKALCTRLRVPNETRDLALLVSDQHQNVHQAFELRAETIVKIFDKADFWRKPERLTQLILACIADMRGRTGFENNPYPQGEYLTQCFLAANNVDIAAIIAAGFQGAEIKQALNLRRIEAVSQFKQKMQTKLPTDEQ</sequence>